<organism>
    <name type="scientific">Escherichia coli O6:K15:H31 (strain 536 / UPEC)</name>
    <dbReference type="NCBI Taxonomy" id="362663"/>
    <lineage>
        <taxon>Bacteria</taxon>
        <taxon>Pseudomonadati</taxon>
        <taxon>Pseudomonadota</taxon>
        <taxon>Gammaproteobacteria</taxon>
        <taxon>Enterobacterales</taxon>
        <taxon>Enterobacteriaceae</taxon>
        <taxon>Escherichia</taxon>
    </lineage>
</organism>
<sequence length="201" mass="22320">MALHDENVVWHSHPVTPQQREQHHGHRGVVLWFTGLSGSGKSTVAGGLEEALHKLGVSTYLLDGDNVRHGLCSDLGFSDADRKENIRRVGEVANLMVEAGLVVLTAFISPHRAERQMVRERVGEGRFIEVFVDTPLAICEARDPKGLYKKARAGELRNFTGIDSVYEAPESAEIHLNGEQLVTNLVQQLLDLLRQNDIIRS</sequence>
<protein>
    <recommendedName>
        <fullName evidence="1">Adenylyl-sulfate kinase</fullName>
        <ecNumber evidence="1">2.7.1.25</ecNumber>
    </recommendedName>
    <alternativeName>
        <fullName evidence="1">APS kinase</fullName>
    </alternativeName>
    <alternativeName>
        <fullName evidence="1">ATP adenosine-5'-phosphosulfate 3'-phosphotransferase</fullName>
    </alternativeName>
    <alternativeName>
        <fullName evidence="1">Adenosine-5'-phosphosulfate kinase</fullName>
    </alternativeName>
</protein>
<dbReference type="EC" id="2.7.1.25" evidence="1"/>
<dbReference type="EMBL" id="CP000247">
    <property type="protein sequence ID" value="ABG70721.1"/>
    <property type="molecule type" value="Genomic_DNA"/>
</dbReference>
<dbReference type="RefSeq" id="WP_001173656.1">
    <property type="nucleotide sequence ID" value="NC_008253.1"/>
</dbReference>
<dbReference type="SMR" id="Q0TEA8"/>
<dbReference type="KEGG" id="ecp:ECP_2732"/>
<dbReference type="HOGENOM" id="CLU_046932_1_0_6"/>
<dbReference type="UniPathway" id="UPA00140">
    <property type="reaction ID" value="UER00205"/>
</dbReference>
<dbReference type="Proteomes" id="UP000009182">
    <property type="component" value="Chromosome"/>
</dbReference>
<dbReference type="GO" id="GO:0004020">
    <property type="term" value="F:adenylylsulfate kinase activity"/>
    <property type="evidence" value="ECO:0007669"/>
    <property type="project" value="UniProtKB-UniRule"/>
</dbReference>
<dbReference type="GO" id="GO:0005524">
    <property type="term" value="F:ATP binding"/>
    <property type="evidence" value="ECO:0007669"/>
    <property type="project" value="UniProtKB-UniRule"/>
</dbReference>
<dbReference type="GO" id="GO:0070814">
    <property type="term" value="P:hydrogen sulfide biosynthetic process"/>
    <property type="evidence" value="ECO:0007669"/>
    <property type="project" value="UniProtKB-UniRule"/>
</dbReference>
<dbReference type="GO" id="GO:0000103">
    <property type="term" value="P:sulfate assimilation"/>
    <property type="evidence" value="ECO:0007669"/>
    <property type="project" value="UniProtKB-UniRule"/>
</dbReference>
<dbReference type="CDD" id="cd02027">
    <property type="entry name" value="APSK"/>
    <property type="match status" value="1"/>
</dbReference>
<dbReference type="FunFam" id="3.40.50.300:FF:000212">
    <property type="entry name" value="Adenylyl-sulfate kinase"/>
    <property type="match status" value="1"/>
</dbReference>
<dbReference type="Gene3D" id="3.40.50.300">
    <property type="entry name" value="P-loop containing nucleotide triphosphate hydrolases"/>
    <property type="match status" value="1"/>
</dbReference>
<dbReference type="HAMAP" id="MF_00065">
    <property type="entry name" value="Adenylyl_sulf_kinase"/>
    <property type="match status" value="1"/>
</dbReference>
<dbReference type="InterPro" id="IPR002891">
    <property type="entry name" value="APS_kinase"/>
</dbReference>
<dbReference type="InterPro" id="IPR027417">
    <property type="entry name" value="P-loop_NTPase"/>
</dbReference>
<dbReference type="NCBIfam" id="TIGR00455">
    <property type="entry name" value="apsK"/>
    <property type="match status" value="1"/>
</dbReference>
<dbReference type="NCBIfam" id="NF003013">
    <property type="entry name" value="PRK03846.1"/>
    <property type="match status" value="1"/>
</dbReference>
<dbReference type="PANTHER" id="PTHR11055:SF63">
    <property type="entry name" value="ADENYLYL-SULFATE KINASE 1, CHLOROPLASTIC"/>
    <property type="match status" value="1"/>
</dbReference>
<dbReference type="PANTHER" id="PTHR11055">
    <property type="entry name" value="BIFUNCTIONAL 3'-PHOSPHOADENOSINE 5'-PHOSPHOSULFATE SYNTHASE"/>
    <property type="match status" value="1"/>
</dbReference>
<dbReference type="Pfam" id="PF01583">
    <property type="entry name" value="APS_kinase"/>
    <property type="match status" value="1"/>
</dbReference>
<dbReference type="SUPFAM" id="SSF52540">
    <property type="entry name" value="P-loop containing nucleoside triphosphate hydrolases"/>
    <property type="match status" value="1"/>
</dbReference>
<keyword id="KW-0067">ATP-binding</keyword>
<keyword id="KW-0418">Kinase</keyword>
<keyword id="KW-0547">Nucleotide-binding</keyword>
<keyword id="KW-0597">Phosphoprotein</keyword>
<keyword id="KW-0808">Transferase</keyword>
<feature type="chain" id="PRO_1000009011" description="Adenylyl-sulfate kinase">
    <location>
        <begin position="1"/>
        <end position="201"/>
    </location>
</feature>
<feature type="region of interest" description="Disordered" evidence="2">
    <location>
        <begin position="1"/>
        <end position="23"/>
    </location>
</feature>
<feature type="active site" description="Phosphoserine intermediate" evidence="1">
    <location>
        <position position="109"/>
    </location>
</feature>
<feature type="binding site" evidence="1">
    <location>
        <begin position="35"/>
        <end position="42"/>
    </location>
    <ligand>
        <name>ATP</name>
        <dbReference type="ChEBI" id="CHEBI:30616"/>
    </ligand>
</feature>
<comment type="function">
    <text evidence="1">Catalyzes the synthesis of activated sulfate.</text>
</comment>
<comment type="catalytic activity">
    <reaction evidence="1">
        <text>adenosine 5'-phosphosulfate + ATP = 3'-phosphoadenylyl sulfate + ADP + H(+)</text>
        <dbReference type="Rhea" id="RHEA:24152"/>
        <dbReference type="ChEBI" id="CHEBI:15378"/>
        <dbReference type="ChEBI" id="CHEBI:30616"/>
        <dbReference type="ChEBI" id="CHEBI:58243"/>
        <dbReference type="ChEBI" id="CHEBI:58339"/>
        <dbReference type="ChEBI" id="CHEBI:456216"/>
        <dbReference type="EC" id="2.7.1.25"/>
    </reaction>
</comment>
<comment type="pathway">
    <text evidence="1">Sulfur metabolism; hydrogen sulfide biosynthesis; sulfite from sulfate: step 2/3.</text>
</comment>
<comment type="similarity">
    <text evidence="1">Belongs to the APS kinase family.</text>
</comment>
<gene>
    <name evidence="1" type="primary">cysC</name>
    <name type="ordered locus">ECP_2732</name>
</gene>
<evidence type="ECO:0000255" key="1">
    <source>
        <dbReference type="HAMAP-Rule" id="MF_00065"/>
    </source>
</evidence>
<evidence type="ECO:0000256" key="2">
    <source>
        <dbReference type="SAM" id="MobiDB-lite"/>
    </source>
</evidence>
<reference key="1">
    <citation type="journal article" date="2006" name="Mol. Microbiol.">
        <title>Role of pathogenicity island-associated integrases in the genome plasticity of uropathogenic Escherichia coli strain 536.</title>
        <authorList>
            <person name="Hochhut B."/>
            <person name="Wilde C."/>
            <person name="Balling G."/>
            <person name="Middendorf B."/>
            <person name="Dobrindt U."/>
            <person name="Brzuszkiewicz E."/>
            <person name="Gottschalk G."/>
            <person name="Carniel E."/>
            <person name="Hacker J."/>
        </authorList>
    </citation>
    <scope>NUCLEOTIDE SEQUENCE [LARGE SCALE GENOMIC DNA]</scope>
    <source>
        <strain>536 / UPEC</strain>
    </source>
</reference>
<accession>Q0TEA8</accession>
<proteinExistence type="inferred from homology"/>
<name>CYSC_ECOL5</name>